<dbReference type="EMBL" id="EU325680">
    <property type="protein sequence ID" value="ACF08683.1"/>
    <property type="molecule type" value="Genomic_DNA"/>
</dbReference>
<dbReference type="EMBL" id="EU325680">
    <property type="protein sequence ID" value="ACF08694.1"/>
    <property type="molecule type" value="Genomic_DNA"/>
</dbReference>
<dbReference type="SMR" id="B3TN95"/>
<dbReference type="FunCoup" id="B3TN95">
    <property type="interactions" value="207"/>
</dbReference>
<dbReference type="STRING" id="15368.B3TN95"/>
<dbReference type="EnsemblPlants" id="KQK18212">
    <property type="protein sequence ID" value="KQK18212"/>
    <property type="gene ID" value="BRADI_1g05804v3"/>
</dbReference>
<dbReference type="Gramene" id="KQK18212">
    <property type="protein sequence ID" value="KQK18212"/>
    <property type="gene ID" value="BRADI_1g05804v3"/>
</dbReference>
<dbReference type="KEGG" id="bdi:6439806"/>
<dbReference type="KEGG" id="bdi:6439894"/>
<dbReference type="eggNOG" id="KOG2815">
    <property type="taxonomic scope" value="Eukaryota"/>
</dbReference>
<dbReference type="HOGENOM" id="CLU_148518_1_1_1"/>
<dbReference type="InParanoid" id="B3TN95"/>
<dbReference type="OMA" id="GHFATHK"/>
<dbReference type="OrthoDB" id="364880at2759"/>
<dbReference type="Proteomes" id="UP000008810">
    <property type="component" value="Unplaced"/>
</dbReference>
<dbReference type="ExpressionAtlas" id="B3TN95">
    <property type="expression patterns" value="baseline"/>
</dbReference>
<dbReference type="GO" id="GO:0009507">
    <property type="term" value="C:chloroplast"/>
    <property type="evidence" value="ECO:0007669"/>
    <property type="project" value="UniProtKB-SubCell"/>
</dbReference>
<dbReference type="GO" id="GO:1990904">
    <property type="term" value="C:ribonucleoprotein complex"/>
    <property type="evidence" value="ECO:0007669"/>
    <property type="project" value="UniProtKB-KW"/>
</dbReference>
<dbReference type="GO" id="GO:0005840">
    <property type="term" value="C:ribosome"/>
    <property type="evidence" value="ECO:0007669"/>
    <property type="project" value="UniProtKB-KW"/>
</dbReference>
<dbReference type="GO" id="GO:0003735">
    <property type="term" value="F:structural constituent of ribosome"/>
    <property type="evidence" value="ECO:0007669"/>
    <property type="project" value="InterPro"/>
</dbReference>
<dbReference type="GO" id="GO:0006412">
    <property type="term" value="P:translation"/>
    <property type="evidence" value="ECO:0007669"/>
    <property type="project" value="UniProtKB-UniRule"/>
</dbReference>
<dbReference type="Gene3D" id="1.10.287.10">
    <property type="entry name" value="S15/NS1, RNA-binding"/>
    <property type="match status" value="1"/>
</dbReference>
<dbReference type="HAMAP" id="MF_01343_B">
    <property type="entry name" value="Ribosomal_uS15_B"/>
    <property type="match status" value="1"/>
</dbReference>
<dbReference type="InterPro" id="IPR000589">
    <property type="entry name" value="Ribosomal_uS15"/>
</dbReference>
<dbReference type="InterPro" id="IPR005290">
    <property type="entry name" value="Ribosomal_uS15_bac-type"/>
</dbReference>
<dbReference type="InterPro" id="IPR009068">
    <property type="entry name" value="uS15_NS1_RNA-bd_sf"/>
</dbReference>
<dbReference type="NCBIfam" id="TIGR00952">
    <property type="entry name" value="S15_bact"/>
    <property type="match status" value="1"/>
</dbReference>
<dbReference type="PANTHER" id="PTHR23321">
    <property type="entry name" value="RIBOSOMAL PROTEIN S15, BACTERIAL AND ORGANELLAR"/>
    <property type="match status" value="1"/>
</dbReference>
<dbReference type="PANTHER" id="PTHR23321:SF26">
    <property type="entry name" value="SMALL RIBOSOMAL SUBUNIT PROTEIN US15M"/>
    <property type="match status" value="1"/>
</dbReference>
<dbReference type="Pfam" id="PF00312">
    <property type="entry name" value="Ribosomal_S15"/>
    <property type="match status" value="1"/>
</dbReference>
<dbReference type="SMART" id="SM01387">
    <property type="entry name" value="Ribosomal_S15"/>
    <property type="match status" value="1"/>
</dbReference>
<dbReference type="SUPFAM" id="SSF47060">
    <property type="entry name" value="S15/NS1 RNA-binding domain"/>
    <property type="match status" value="1"/>
</dbReference>
<dbReference type="PROSITE" id="PS00362">
    <property type="entry name" value="RIBOSOMAL_S15"/>
    <property type="match status" value="1"/>
</dbReference>
<keyword id="KW-0150">Chloroplast</keyword>
<keyword id="KW-0934">Plastid</keyword>
<keyword id="KW-1185">Reference proteome</keyword>
<keyword id="KW-0687">Ribonucleoprotein</keyword>
<keyword id="KW-0689">Ribosomal protein</keyword>
<comment type="subunit">
    <text evidence="1">Part of the 30S ribosomal subunit.</text>
</comment>
<comment type="subcellular location">
    <subcellularLocation>
        <location>Plastid</location>
        <location>Chloroplast</location>
    </subcellularLocation>
</comment>
<comment type="similarity">
    <text evidence="2">Belongs to the universal ribosomal protein uS15 family.</text>
</comment>
<organism>
    <name type="scientific">Brachypodium distachyon</name>
    <name type="common">Purple false brome</name>
    <name type="synonym">Trachynia distachya</name>
    <dbReference type="NCBI Taxonomy" id="15368"/>
    <lineage>
        <taxon>Eukaryota</taxon>
        <taxon>Viridiplantae</taxon>
        <taxon>Streptophyta</taxon>
        <taxon>Embryophyta</taxon>
        <taxon>Tracheophyta</taxon>
        <taxon>Spermatophyta</taxon>
        <taxon>Magnoliopsida</taxon>
        <taxon>Liliopsida</taxon>
        <taxon>Poales</taxon>
        <taxon>Poaceae</taxon>
        <taxon>BOP clade</taxon>
        <taxon>Pooideae</taxon>
        <taxon>Stipodae</taxon>
        <taxon>Brachypodieae</taxon>
        <taxon>Brachypodium</taxon>
    </lineage>
</organism>
<accession>B3TN95</accession>
<evidence type="ECO:0000250" key="1"/>
<evidence type="ECO:0000305" key="2"/>
<sequence length="90" mass="10837">MKKKGGRKIFGFMVKEEKEEKKGSVEFQVFSFTNKIRRLASHLELHKKDFSSERGLRRLLGKRRRLLAYLAKKNRVRYKKLISQLNIREQ</sequence>
<feature type="chain" id="PRO_0000354239" description="Small ribosomal subunit protein uS15c">
    <location>
        <begin position="1"/>
        <end position="90"/>
    </location>
</feature>
<gene>
    <name type="primary">rps15-A</name>
</gene>
<gene>
    <name type="primary">rps15-B</name>
</gene>
<name>RR15_BRADI</name>
<proteinExistence type="inferred from homology"/>
<geneLocation type="chloroplast"/>
<protein>
    <recommendedName>
        <fullName evidence="2">Small ribosomal subunit protein uS15c</fullName>
    </recommendedName>
    <alternativeName>
        <fullName>30S ribosomal protein S15, chloroplastic</fullName>
    </alternativeName>
</protein>
<reference key="1">
    <citation type="journal article" date="2008" name="BMC Res. Notes">
        <title>The complete chloroplast genome sequence of Brachypodium distachyon: sequence comparison and phylogenetic analysis of eight grass plastomes.</title>
        <authorList>
            <person name="Bortiri E."/>
            <person name="Coleman-Derr D."/>
            <person name="Lazo G.R."/>
            <person name="Anderson O.D."/>
            <person name="Gu Y.Q."/>
        </authorList>
    </citation>
    <scope>NUCLEOTIDE SEQUENCE [LARGE SCALE GENOMIC DNA]</scope>
    <source>
        <strain>cv. Bd21</strain>
    </source>
</reference>